<gene>
    <name evidence="3" type="primary">dmdB</name>
    <name evidence="6" type="ORF">SL1157_2728</name>
</gene>
<protein>
    <recommendedName>
        <fullName evidence="3">3-methylmercaptopropionyl-CoA ligase</fullName>
        <shortName evidence="3">MMPA-CoA ligase</shortName>
        <ecNumber evidence="2">6.2.1.44</ecNumber>
    </recommendedName>
</protein>
<evidence type="ECO:0000250" key="1">
    <source>
        <dbReference type="UniProtKB" id="Q5SKN9"/>
    </source>
</evidence>
<evidence type="ECO:0000269" key="2">
    <source>
    </source>
</evidence>
<evidence type="ECO:0000303" key="3">
    <source>
    </source>
</evidence>
<evidence type="ECO:0000305" key="4"/>
<evidence type="ECO:0000305" key="5">
    <source>
    </source>
</evidence>
<evidence type="ECO:0000312" key="6">
    <source>
        <dbReference type="EMBL" id="EEX10665.1"/>
    </source>
</evidence>
<evidence type="ECO:0007744" key="7">
    <source>
        <dbReference type="PDB" id="6IHK"/>
    </source>
</evidence>
<evidence type="ECO:0007744" key="8">
    <source>
        <dbReference type="PDB" id="6IJB"/>
    </source>
</evidence>
<name>DMDB_RUELI</name>
<dbReference type="EC" id="6.2.1.44" evidence="2"/>
<dbReference type="EMBL" id="GG704596">
    <property type="protein sequence ID" value="EEX10665.1"/>
    <property type="molecule type" value="Genomic_DNA"/>
</dbReference>
<dbReference type="PDB" id="6IHK">
    <property type="method" value="X-ray"/>
    <property type="resolution" value="2.23 A"/>
    <property type="chains" value="A/B=1-539"/>
</dbReference>
<dbReference type="PDB" id="6IJB">
    <property type="method" value="X-ray"/>
    <property type="resolution" value="2.11 A"/>
    <property type="chains" value="A/B=1-539"/>
</dbReference>
<dbReference type="PDBsum" id="6IHK"/>
<dbReference type="PDBsum" id="6IJB"/>
<dbReference type="SMR" id="P0DX84"/>
<dbReference type="GO" id="GO:0005524">
    <property type="term" value="F:ATP binding"/>
    <property type="evidence" value="ECO:0007669"/>
    <property type="project" value="UniProtKB-KW"/>
</dbReference>
<dbReference type="GO" id="GO:0016874">
    <property type="term" value="F:ligase activity"/>
    <property type="evidence" value="ECO:0007669"/>
    <property type="project" value="UniProtKB-KW"/>
</dbReference>
<dbReference type="GO" id="GO:0046872">
    <property type="term" value="F:metal ion binding"/>
    <property type="evidence" value="ECO:0007669"/>
    <property type="project" value="UniProtKB-KW"/>
</dbReference>
<dbReference type="GO" id="GO:0006631">
    <property type="term" value="P:fatty acid metabolic process"/>
    <property type="evidence" value="ECO:0007669"/>
    <property type="project" value="UniProtKB-KW"/>
</dbReference>
<dbReference type="CDD" id="cd12119">
    <property type="entry name" value="ttLC_FACS_AlkK_like"/>
    <property type="match status" value="1"/>
</dbReference>
<dbReference type="FunFam" id="3.30.300.30:FF:000008">
    <property type="entry name" value="2,3-dihydroxybenzoate-AMP ligase"/>
    <property type="match status" value="1"/>
</dbReference>
<dbReference type="Gene3D" id="3.30.300.30">
    <property type="match status" value="1"/>
</dbReference>
<dbReference type="Gene3D" id="3.40.50.12780">
    <property type="entry name" value="N-terminal domain of ligase-like"/>
    <property type="match status" value="1"/>
</dbReference>
<dbReference type="InterPro" id="IPR025110">
    <property type="entry name" value="AMP-bd_C"/>
</dbReference>
<dbReference type="InterPro" id="IPR045851">
    <property type="entry name" value="AMP-bd_C_sf"/>
</dbReference>
<dbReference type="InterPro" id="IPR020845">
    <property type="entry name" value="AMP-binding_CS"/>
</dbReference>
<dbReference type="InterPro" id="IPR000873">
    <property type="entry name" value="AMP-dep_synth/lig_dom"/>
</dbReference>
<dbReference type="InterPro" id="IPR042099">
    <property type="entry name" value="ANL_N_sf"/>
</dbReference>
<dbReference type="NCBIfam" id="NF004837">
    <property type="entry name" value="PRK06187.1"/>
    <property type="match status" value="1"/>
</dbReference>
<dbReference type="PANTHER" id="PTHR43859">
    <property type="entry name" value="ACYL-ACTIVATING ENZYME"/>
    <property type="match status" value="1"/>
</dbReference>
<dbReference type="PANTHER" id="PTHR43859:SF4">
    <property type="entry name" value="BUTANOATE--COA LIGASE AAE1-RELATED"/>
    <property type="match status" value="1"/>
</dbReference>
<dbReference type="Pfam" id="PF00501">
    <property type="entry name" value="AMP-binding"/>
    <property type="match status" value="1"/>
</dbReference>
<dbReference type="Pfam" id="PF13193">
    <property type="entry name" value="AMP-binding_C"/>
    <property type="match status" value="1"/>
</dbReference>
<dbReference type="SUPFAM" id="SSF56801">
    <property type="entry name" value="Acetyl-CoA synthetase-like"/>
    <property type="match status" value="1"/>
</dbReference>
<dbReference type="PROSITE" id="PS00455">
    <property type="entry name" value="AMP_BINDING"/>
    <property type="match status" value="1"/>
</dbReference>
<comment type="function">
    <text evidence="2">Involved in the assimilation of dimethylsulphoniopropionate (DMSP), an important compound in the fixation of carbon in marine phytoplankton (PubMed:30677184). Catalyzes the ATP-dependent ligation of methylmercaptopropionate (MMPA) and CoA to yield methylmercaptopropionate-CoA (MMPA-CoA) (PubMed:30677184).</text>
</comment>
<comment type="catalytic activity">
    <reaction evidence="2">
        <text>3-(methylsulfanyl)propanoate + ATP + CoA = 3-(methylsulfanyl)propanoyl-CoA + AMP + diphosphate</text>
        <dbReference type="Rhea" id="RHEA:43052"/>
        <dbReference type="ChEBI" id="CHEBI:30616"/>
        <dbReference type="ChEBI" id="CHEBI:33019"/>
        <dbReference type="ChEBI" id="CHEBI:49016"/>
        <dbReference type="ChEBI" id="CHEBI:57287"/>
        <dbReference type="ChEBI" id="CHEBI:82815"/>
        <dbReference type="ChEBI" id="CHEBI:456215"/>
        <dbReference type="EC" id="6.2.1.44"/>
    </reaction>
    <physiologicalReaction direction="left-to-right" evidence="2">
        <dbReference type="Rhea" id="RHEA:43053"/>
    </physiologicalReaction>
</comment>
<comment type="cofactor">
    <cofactor evidence="2">
        <name>Mg(2+)</name>
        <dbReference type="ChEBI" id="CHEBI:18420"/>
    </cofactor>
</comment>
<comment type="activity regulation">
    <text evidence="2">ADP acts as a competitive inhibitor and inhibits the ligase activity.</text>
</comment>
<comment type="biophysicochemical properties">
    <kinetics>
        <KM evidence="2">0.2 mM for MMPA</KM>
        <KM evidence="2">0.8 mM for ATP</KM>
        <KM evidence="2">0.4 mM for CoA</KM>
    </kinetics>
    <phDependence>
        <text evidence="2">Optimum pH is 8.0-9.0.</text>
    </phDependence>
    <temperatureDependence>
        <text evidence="2">Optimum temperature is 40 degrees Celsius.</text>
    </temperatureDependence>
</comment>
<comment type="subunit">
    <text evidence="2">Homodimer.</text>
</comment>
<comment type="induction">
    <text evidence="2">Expression is up-regulated in the presence of DMSP.</text>
</comment>
<comment type="domain">
    <text evidence="2">Each monomer consists of a large N-terminal domain (Met-1 to Arg-432) and a small C-terminal domain (Ser-433 to Gly-539) (PubMed:30677184). The active center is located at the interface between the two domains (PubMed:30677184). Undergoes two sequential conformational changes to catalyze the ligation of MMPA and CoA (PubMed:30677184).</text>
</comment>
<comment type="similarity">
    <text evidence="4">Belongs to the ATP-dependent AMP-binding enzyme family.</text>
</comment>
<feature type="chain" id="PRO_0000459399" description="3-methylmercaptopropionyl-CoA ligase">
    <location>
        <begin position="1"/>
        <end position="539"/>
    </location>
</feature>
<feature type="binding site" evidence="1">
    <location>
        <position position="185"/>
    </location>
    <ligand>
        <name>Mg(2+)</name>
        <dbReference type="ChEBI" id="CHEBI:18420"/>
    </ligand>
</feature>
<feature type="binding site" evidence="5 7 8">
    <location>
        <position position="231"/>
    </location>
    <ligand>
        <name>ATP</name>
        <dbReference type="ChEBI" id="CHEBI:30616"/>
    </ligand>
</feature>
<feature type="binding site" evidence="5 7 8">
    <location>
        <position position="303"/>
    </location>
    <ligand>
        <name>ATP</name>
        <dbReference type="ChEBI" id="CHEBI:30616"/>
    </ligand>
</feature>
<feature type="binding site" evidence="5 7 8">
    <location>
        <position position="324"/>
    </location>
    <ligand>
        <name>ATP</name>
        <dbReference type="ChEBI" id="CHEBI:30616"/>
    </ligand>
</feature>
<feature type="binding site" evidence="5 7 8">
    <location>
        <position position="325"/>
    </location>
    <ligand>
        <name>ATP</name>
        <dbReference type="ChEBI" id="CHEBI:30616"/>
    </ligand>
</feature>
<feature type="binding site" evidence="5 7 8">
    <location>
        <position position="329"/>
    </location>
    <ligand>
        <name>ATP</name>
        <dbReference type="ChEBI" id="CHEBI:30616"/>
    </ligand>
</feature>
<feature type="binding site" evidence="1">
    <location>
        <position position="330"/>
    </location>
    <ligand>
        <name>Mg(2+)</name>
        <dbReference type="ChEBI" id="CHEBI:18420"/>
    </ligand>
</feature>
<feature type="binding site" evidence="5 7 8">
    <location>
        <position position="359"/>
    </location>
    <ligand>
        <name>ATP</name>
        <dbReference type="ChEBI" id="CHEBI:30616"/>
    </ligand>
</feature>
<feature type="binding site" evidence="5 7 8">
    <location>
        <position position="417"/>
    </location>
    <ligand>
        <name>ATP</name>
        <dbReference type="ChEBI" id="CHEBI:30616"/>
    </ligand>
</feature>
<feature type="binding site" evidence="5 7">
    <location>
        <position position="432"/>
    </location>
    <ligand>
        <name>ATP</name>
        <dbReference type="ChEBI" id="CHEBI:30616"/>
    </ligand>
</feature>
<feature type="binding site" evidence="5 7">
    <location>
        <position position="523"/>
    </location>
    <ligand>
        <name>ATP</name>
        <dbReference type="ChEBI" id="CHEBI:30616"/>
    </ligand>
</feature>
<feature type="site" description="Plays an important role in catalysis" evidence="2">
    <location>
        <position position="523"/>
    </location>
</feature>
<feature type="mutagenesis site" description="Retains 74% of wild-type activity." evidence="2">
    <original>H</original>
    <variation>A</variation>
    <location>
        <position position="231"/>
    </location>
</feature>
<feature type="mutagenesis site" description="Almost completely abolishes the activity." evidence="2">
    <original>W</original>
    <variation>A</variation>
    <location>
        <position position="235"/>
    </location>
</feature>
<feature type="mutagenesis site" description="Almost completely abolishes the activity." evidence="2">
    <original>G</original>
    <variation>P</variation>
    <location>
        <position position="302"/>
    </location>
</feature>
<feature type="mutagenesis site" description="Almost completely abolishes the activity." evidence="2">
    <original>G</original>
    <variation>P</variation>
    <location>
        <position position="303"/>
    </location>
</feature>
<feature type="mutagenesis site" description="Retains 7.7% of wild-type activity." evidence="2">
    <original>W</original>
    <variation>A</variation>
    <location>
        <position position="326"/>
    </location>
</feature>
<feature type="mutagenesis site" description="Retains 69% of wild-type activity." evidence="2">
    <original>P</original>
    <variation>A</variation>
    <location>
        <position position="333"/>
    </location>
</feature>
<feature type="mutagenesis site" description="Retains 4.3% of wild-type activity." evidence="2">
    <original>R</original>
    <variation>A</variation>
    <location>
        <position position="432"/>
    </location>
</feature>
<feature type="mutagenesis site" description="Retains 36% of wild-type activity." evidence="2">
    <original>K</original>
    <variation>A</variation>
    <location>
        <position position="434"/>
    </location>
</feature>
<feature type="mutagenesis site" description="Retains 76% of wild-type activity." evidence="2">
    <original>D</original>
    <variation>A</variation>
    <location>
        <position position="435"/>
    </location>
</feature>
<feature type="mutagenesis site" description="Retains 5.6% of wild-type activity." evidence="2">
    <original>K</original>
    <variation>A</variation>
    <location>
        <position position="438"/>
    </location>
</feature>
<feature type="mutagenesis site" description="Retains 3.6% of wild-type activity." evidence="2">
    <original>G</original>
    <variation>P</variation>
    <location>
        <position position="440"/>
    </location>
</feature>
<feature type="mutagenesis site" description="Retains 2.7% of wild-type activity." evidence="2">
    <original>G</original>
    <variation>P</variation>
    <location>
        <position position="441"/>
    </location>
</feature>
<feature type="mutagenesis site" description="Retains 27% of wild-type activity." evidence="2">
    <original>E</original>
    <variation>A</variation>
    <location>
        <position position="442"/>
    </location>
</feature>
<feature type="mutagenesis site" description="Retains 60% of wild-type activity." evidence="2">
    <original>W</original>
    <variation>A</variation>
    <location>
        <position position="443"/>
    </location>
</feature>
<feature type="mutagenesis site" description="Retains 33% of wild-type activity." evidence="2">
    <original>E</original>
    <variation>A</variation>
    <location>
        <position position="474"/>
    </location>
</feature>
<feature type="mutagenesis site" description="Retains 1.6% of wild-type activity." evidence="2">
    <original>K</original>
    <variation>A</variation>
    <location>
        <position position="523"/>
    </location>
</feature>
<feature type="mutagenesis site" description="Retains 1.4% of wild-type activity." evidence="2">
    <original>K</original>
    <variation>E</variation>
    <location>
        <position position="523"/>
    </location>
</feature>
<feature type="mutagenesis site" description="Retains 57% of wild-type activity." evidence="2">
    <original>K</original>
    <variation>R</variation>
    <location>
        <position position="523"/>
    </location>
</feature>
<feature type="mutagenesis site" description="Retains 48% of wild-type activity." evidence="2">
    <original>K</original>
    <variation>A</variation>
    <location>
        <position position="526"/>
    </location>
</feature>
<proteinExistence type="evidence at protein level"/>
<keyword id="KW-0002">3D-structure</keyword>
<keyword id="KW-0067">ATP-binding</keyword>
<keyword id="KW-0276">Fatty acid metabolism</keyword>
<keyword id="KW-0436">Ligase</keyword>
<keyword id="KW-0443">Lipid metabolism</keyword>
<keyword id="KW-0460">Magnesium</keyword>
<keyword id="KW-0479">Metal-binding</keyword>
<keyword id="KW-0547">Nucleotide-binding</keyword>
<accession>P0DX84</accession>
<reference key="1">
    <citation type="submission" date="2008-09" db="EMBL/GenBank/DDBJ databases">
        <authorList>
            <person name="Zinser E."/>
            <person name="Buchan A."/>
            <person name="Ferriera S.F."/>
            <person name="Johnson J.J."/>
            <person name="Kravitz S.K."/>
            <person name="Beeson K.B."/>
            <person name="Sutton G.S."/>
            <person name="Rogers Y.-H.R."/>
            <person name="Friedman R.F."/>
            <person name="Frazier M.F."/>
            <person name="Venter J.C.V."/>
        </authorList>
    </citation>
    <scope>NUCLEOTIDE SEQUENCE [LARGE SCALE GENOMIC DNA]</scope>
    <source>
        <strain>DSM 11314 / KCTC 2953 / ITI-1157</strain>
    </source>
</reference>
<reference evidence="7 8" key="2">
    <citation type="journal article" date="2019" name="Mol. Microbiol.">
        <title>Mechanistic insight into 3-methylmercaptopropionate metabolism and kinetical regulation of demethylation pathway in marine dimethylsulfoniopropionate-catabolizing bacteria.</title>
        <authorList>
            <person name="Shao X."/>
            <person name="Cao H.Y."/>
            <person name="Zhao F."/>
            <person name="Peng M."/>
            <person name="Wang P."/>
            <person name="Li C.Y."/>
            <person name="Shi W.L."/>
            <person name="Wei T.D."/>
            <person name="Yuan Z."/>
            <person name="Zhang X.H."/>
            <person name="Chen X.L."/>
            <person name="Todd J.D."/>
            <person name="Zhang Y.Z."/>
        </authorList>
    </citation>
    <scope>X-RAY CRYSTALLOGRAPHY (2.11 ANGSTROMS) OF WILD-TYPE IN COMPLEX WITH ADP AND OF MUTANT ALA-523 IN COMPLEX WITH AMP AND MMPA</scope>
    <scope>FUNCTION</scope>
    <scope>CATALYTIC ACTIVITY</scope>
    <scope>REACTION MECHANISM</scope>
    <scope>COFACTOR</scope>
    <scope>ACTIVITY REGULATION</scope>
    <scope>BIOPHYSICOCHEMICAL PROPERTIES</scope>
    <scope>SUBUNIT</scope>
    <scope>INDUCTION</scope>
    <scope>DOMAIN</scope>
    <scope>MUTAGENESIS OF HIS-231; TRP-235; GLY-302; GLY-303; TRP-326; PRO-333; ARG-432; LYS-434; ASP-435; LYS-438; GLY-440; GLY-441; GLU-442; TRP-443; GLU-474; LYS-523 AND LYS-526</scope>
    <source>
        <strain>DSM 11314 / KCTC 2953 / ITI-1157</strain>
    </source>
</reference>
<sequence length="539" mass="59400">MLGQMMTQPLLISSLIDHAARYHGQTEIVSVETDGTVTRTNWGEIAANARRMGSALTKLGLQPQDRIGTLAWNNRRHLEIYYAASGAGFVCHTINPRLFPEQLVYIINHAQDRVLFFDATFLPLVAAIRDQLTEVKHFVLMGPRNEDALQQIPGLEFYDELIETGDTDFEWPVFDENTASSLCYTSGTTGHPKGVLYSHRSTVLHSFASNTRDVIGYSAMDVVMPVVPMFHVNAWGSPYGCAMSGAQMVLPGPDLHGEALVNLIDTYGVTLAMGVPTIWQGLLAHAAKCGTKLESLERTVIGGAACPPSMIATFREKYGVDTVHAWGMSEMSPLGTANIPLAKHRKLPIEEQHKLRENQGRPPFGVELKIVDDDGNDLPHDGVTQGDLMVRGHWVLDSYFQLKDQELLQDGWFATGDVATLDPDGYMTIRDRSKDIIKSGGEWISSVELENIAVAHPKLATAAVIGVPHPKWDERPLLVAVKAEGEDPSEAELLEFFDGKIAKWQVPDKVVFVDALPLNATGKVLKRKLRDEFKDALTG</sequence>
<organism>
    <name type="scientific">Ruegeria lacuscaerulensis (strain DSM 11314 / KCTC 2953 / ITI-1157)</name>
    <name type="common">Silicibacter lacuscaerulensis</name>
    <dbReference type="NCBI Taxonomy" id="644107"/>
    <lineage>
        <taxon>Bacteria</taxon>
        <taxon>Pseudomonadati</taxon>
        <taxon>Pseudomonadota</taxon>
        <taxon>Alphaproteobacteria</taxon>
        <taxon>Rhodobacterales</taxon>
        <taxon>Roseobacteraceae</taxon>
        <taxon>Ruegeria</taxon>
    </lineage>
</organism>